<name>ATPD_ENTFA</name>
<sequence>MKLDKYTVGKRYGKALFELAVEKNQAEAIYQELLTLREVYHQVPGIGDILSDDRLEPYEKDSIMEKLVTGFSEMMQNFLRVVYEYRRMYDLLLMIDEYERRYDEHQGLILGSVTTAIPLSKEQHQAMEEKAAQLLGYEQAHLVNLIDPSIVGGVVIEANHQVIDGSIRKQLEHMQQKLLK</sequence>
<evidence type="ECO:0000255" key="1">
    <source>
        <dbReference type="HAMAP-Rule" id="MF_01416"/>
    </source>
</evidence>
<organism>
    <name type="scientific">Enterococcus faecalis (strain ATCC 700802 / V583)</name>
    <dbReference type="NCBI Taxonomy" id="226185"/>
    <lineage>
        <taxon>Bacteria</taxon>
        <taxon>Bacillati</taxon>
        <taxon>Bacillota</taxon>
        <taxon>Bacilli</taxon>
        <taxon>Lactobacillales</taxon>
        <taxon>Enterococcaceae</taxon>
        <taxon>Enterococcus</taxon>
    </lineage>
</organism>
<proteinExistence type="inferred from homology"/>
<dbReference type="EMBL" id="AE016830">
    <property type="protein sequence ID" value="AAO82320.1"/>
    <property type="molecule type" value="Genomic_DNA"/>
</dbReference>
<dbReference type="RefSeq" id="NP_816250.1">
    <property type="nucleotide sequence ID" value="NC_004668.1"/>
</dbReference>
<dbReference type="RefSeq" id="WP_002356554.1">
    <property type="nucleotide sequence ID" value="NZ_KE136528.1"/>
</dbReference>
<dbReference type="SMR" id="Q831A2"/>
<dbReference type="STRING" id="226185.EF_2611"/>
<dbReference type="EnsemblBacteria" id="AAO82320">
    <property type="protein sequence ID" value="AAO82320"/>
    <property type="gene ID" value="EF_2611"/>
</dbReference>
<dbReference type="GeneID" id="60894613"/>
<dbReference type="KEGG" id="efa:EF2611"/>
<dbReference type="PATRIC" id="fig|226185.45.peg.945"/>
<dbReference type="eggNOG" id="COG0712">
    <property type="taxonomic scope" value="Bacteria"/>
</dbReference>
<dbReference type="HOGENOM" id="CLU_085114_4_1_9"/>
<dbReference type="Proteomes" id="UP000001415">
    <property type="component" value="Chromosome"/>
</dbReference>
<dbReference type="GO" id="GO:0005886">
    <property type="term" value="C:plasma membrane"/>
    <property type="evidence" value="ECO:0007669"/>
    <property type="project" value="UniProtKB-SubCell"/>
</dbReference>
<dbReference type="GO" id="GO:0045259">
    <property type="term" value="C:proton-transporting ATP synthase complex"/>
    <property type="evidence" value="ECO:0007669"/>
    <property type="project" value="UniProtKB-KW"/>
</dbReference>
<dbReference type="GO" id="GO:0046933">
    <property type="term" value="F:proton-transporting ATP synthase activity, rotational mechanism"/>
    <property type="evidence" value="ECO:0007669"/>
    <property type="project" value="UniProtKB-UniRule"/>
</dbReference>
<dbReference type="Gene3D" id="1.10.520.20">
    <property type="entry name" value="N-terminal domain of the delta subunit of the F1F0-ATP synthase"/>
    <property type="match status" value="1"/>
</dbReference>
<dbReference type="HAMAP" id="MF_01416">
    <property type="entry name" value="ATP_synth_delta_bact"/>
    <property type="match status" value="1"/>
</dbReference>
<dbReference type="InterPro" id="IPR026015">
    <property type="entry name" value="ATP_synth_OSCP/delta_N_sf"/>
</dbReference>
<dbReference type="InterPro" id="IPR000711">
    <property type="entry name" value="ATPase_OSCP/dsu"/>
</dbReference>
<dbReference type="NCBIfam" id="TIGR01145">
    <property type="entry name" value="ATP_synt_delta"/>
    <property type="match status" value="1"/>
</dbReference>
<dbReference type="PANTHER" id="PTHR11910">
    <property type="entry name" value="ATP SYNTHASE DELTA CHAIN"/>
    <property type="match status" value="1"/>
</dbReference>
<dbReference type="Pfam" id="PF00213">
    <property type="entry name" value="OSCP"/>
    <property type="match status" value="1"/>
</dbReference>
<dbReference type="PRINTS" id="PR00125">
    <property type="entry name" value="ATPASEDELTA"/>
</dbReference>
<dbReference type="SUPFAM" id="SSF47928">
    <property type="entry name" value="N-terminal domain of the delta subunit of the F1F0-ATP synthase"/>
    <property type="match status" value="1"/>
</dbReference>
<feature type="chain" id="PRO_1000184707" description="ATP synthase subunit delta">
    <location>
        <begin position="1"/>
        <end position="180"/>
    </location>
</feature>
<accession>Q831A2</accession>
<protein>
    <recommendedName>
        <fullName evidence="1">ATP synthase subunit delta</fullName>
    </recommendedName>
    <alternativeName>
        <fullName evidence="1">ATP synthase F(1) sector subunit delta</fullName>
    </alternativeName>
    <alternativeName>
        <fullName evidence="1">F-type ATPase subunit delta</fullName>
        <shortName evidence="1">F-ATPase subunit delta</shortName>
    </alternativeName>
</protein>
<reference key="1">
    <citation type="journal article" date="2003" name="Science">
        <title>Role of mobile DNA in the evolution of vancomycin-resistant Enterococcus faecalis.</title>
        <authorList>
            <person name="Paulsen I.T."/>
            <person name="Banerjei L."/>
            <person name="Myers G.S.A."/>
            <person name="Nelson K.E."/>
            <person name="Seshadri R."/>
            <person name="Read T.D."/>
            <person name="Fouts D.E."/>
            <person name="Eisen J.A."/>
            <person name="Gill S.R."/>
            <person name="Heidelberg J.F."/>
            <person name="Tettelin H."/>
            <person name="Dodson R.J."/>
            <person name="Umayam L.A."/>
            <person name="Brinkac L.M."/>
            <person name="Beanan M.J."/>
            <person name="Daugherty S.C."/>
            <person name="DeBoy R.T."/>
            <person name="Durkin S.A."/>
            <person name="Kolonay J.F."/>
            <person name="Madupu R."/>
            <person name="Nelson W.C."/>
            <person name="Vamathevan J.J."/>
            <person name="Tran B."/>
            <person name="Upton J."/>
            <person name="Hansen T."/>
            <person name="Shetty J."/>
            <person name="Khouri H.M."/>
            <person name="Utterback T.R."/>
            <person name="Radune D."/>
            <person name="Ketchum K.A."/>
            <person name="Dougherty B.A."/>
            <person name="Fraser C.M."/>
        </authorList>
    </citation>
    <scope>NUCLEOTIDE SEQUENCE [LARGE SCALE GENOMIC DNA]</scope>
    <source>
        <strain>ATCC 700802 / V583</strain>
    </source>
</reference>
<keyword id="KW-0066">ATP synthesis</keyword>
<keyword id="KW-1003">Cell membrane</keyword>
<keyword id="KW-0139">CF(1)</keyword>
<keyword id="KW-0375">Hydrogen ion transport</keyword>
<keyword id="KW-0406">Ion transport</keyword>
<keyword id="KW-0472">Membrane</keyword>
<keyword id="KW-1185">Reference proteome</keyword>
<keyword id="KW-0813">Transport</keyword>
<gene>
    <name evidence="1" type="primary">atpH</name>
    <name type="ordered locus">EF_2611</name>
</gene>
<comment type="function">
    <text evidence="1">F(1)F(0) ATP synthase produces ATP from ADP in the presence of a proton or sodium gradient. F-type ATPases consist of two structural domains, F(1) containing the extramembraneous catalytic core and F(0) containing the membrane proton channel, linked together by a central stalk and a peripheral stalk. During catalysis, ATP synthesis in the catalytic domain of F(1) is coupled via a rotary mechanism of the central stalk subunits to proton translocation.</text>
</comment>
<comment type="function">
    <text evidence="1">This protein is part of the stalk that links CF(0) to CF(1). It either transmits conformational changes from CF(0) to CF(1) or is implicated in proton conduction.</text>
</comment>
<comment type="subunit">
    <text evidence="1">F-type ATPases have 2 components, F(1) - the catalytic core - and F(0) - the membrane proton channel. F(1) has five subunits: alpha(3), beta(3), gamma(1), delta(1), epsilon(1). F(0) has three main subunits: a(1), b(2) and c(10-14). The alpha and beta chains form an alternating ring which encloses part of the gamma chain. F(1) is attached to F(0) by a central stalk formed by the gamma and epsilon chains, while a peripheral stalk is formed by the delta and b chains.</text>
</comment>
<comment type="subcellular location">
    <subcellularLocation>
        <location evidence="1">Cell membrane</location>
        <topology evidence="1">Peripheral membrane protein</topology>
    </subcellularLocation>
</comment>
<comment type="similarity">
    <text evidence="1">Belongs to the ATPase delta chain family.</text>
</comment>